<reference key="1">
    <citation type="journal article" date="1999" name="J. Virol.">
        <title>Human herpesvirus 6B genome sequence: coding content and comparison with human herpesvirus 6A.</title>
        <authorList>
            <person name="Dominguez G."/>
            <person name="Dambaugh T.R."/>
            <person name="Stamey F.R."/>
            <person name="Dewhurst S."/>
            <person name="Inoue N."/>
            <person name="Pellett P.E."/>
        </authorList>
    </citation>
    <scope>NUCLEOTIDE SEQUENCE [LARGE SCALE GENOMIC DNA]</scope>
</reference>
<sequence length="294" mass="33036">MKKLTMESLLVYTFVMGVCFTSNLTCEQKIVLIQEQKLGAICISTCYVNGVLAGNSSCVSVRTSYLINLAMLTDGFKAMKVGNITSISEKTAFLRVIINYYFRGVMLRALIAKRLPNAAQLSSTVNCWLEGHSAGGVMTLFYGTERIVLKSSTEMNASQWTSDGPDANGTLNILNERVSLDSYFLSMICPQLSDEIYKKKVVHSKYFSLIKNDTMPKKFLRNTWKSAWTNWYKYKEIEALLDFSRDYENVSEITHSMSAAGLFFLAGGAFTMLLLLCCLSMITRKHVVKDLGYK</sequence>
<gene>
    <name type="primary">U18</name>
</gene>
<evidence type="ECO:0000255" key="1"/>
<evidence type="ECO:0000305" key="2"/>
<organismHost>
    <name type="scientific">Homo sapiens</name>
    <name type="common">Human</name>
    <dbReference type="NCBI Taxonomy" id="9606"/>
</organismHost>
<feature type="signal peptide" evidence="1">
    <location>
        <begin position="1"/>
        <end position="21"/>
    </location>
</feature>
<feature type="chain" id="PRO_0000408421" description="Putative immediate early glycoprotein">
    <location>
        <begin position="22"/>
        <end position="294"/>
    </location>
</feature>
<feature type="transmembrane region" description="Helical" evidence="1">
    <location>
        <begin position="262"/>
        <end position="282"/>
    </location>
</feature>
<dbReference type="EMBL" id="AF157706">
    <property type="protein sequence ID" value="AAD49630.1"/>
    <property type="molecule type" value="Genomic_DNA"/>
</dbReference>
<dbReference type="RefSeq" id="NP_050198.1">
    <property type="nucleotide sequence ID" value="NC_000898.1"/>
</dbReference>
<dbReference type="GeneID" id="1497014"/>
<dbReference type="KEGG" id="vg:1497014"/>
<dbReference type="Proteomes" id="UP000006930">
    <property type="component" value="Segment"/>
</dbReference>
<dbReference type="GO" id="GO:0033644">
    <property type="term" value="C:host cell membrane"/>
    <property type="evidence" value="ECO:0007669"/>
    <property type="project" value="UniProtKB-SubCell"/>
</dbReference>
<dbReference type="GO" id="GO:0016020">
    <property type="term" value="C:membrane"/>
    <property type="evidence" value="ECO:0007669"/>
    <property type="project" value="UniProtKB-KW"/>
</dbReference>
<dbReference type="InterPro" id="IPR010880">
    <property type="entry name" value="Herpes_UL37_HHV-5-rel"/>
</dbReference>
<dbReference type="Pfam" id="PF07413">
    <property type="entry name" value="Herpes_UL37_2"/>
    <property type="match status" value="1"/>
</dbReference>
<keyword id="KW-1043">Host membrane</keyword>
<keyword id="KW-0472">Membrane</keyword>
<keyword id="KW-1185">Reference proteome</keyword>
<keyword id="KW-0732">Signal</keyword>
<keyword id="KW-0812">Transmembrane</keyword>
<keyword id="KW-1133">Transmembrane helix</keyword>
<comment type="subcellular location">
    <subcellularLocation>
        <location evidence="2">Host membrane</location>
        <topology evidence="2">Single-pass membrane protein</topology>
    </subcellularLocation>
</comment>
<comment type="similarity">
    <text evidence="2">Belongs to the herpesviridae immediate early glycoprotein family.</text>
</comment>
<accession>P0DXM1</accession>
<accession>Q77PV4</accession>
<accession>Q9WT46</accession>
<name>U18_HHV6Z</name>
<protein>
    <recommendedName>
        <fullName>Putative immediate early glycoprotein</fullName>
    </recommendedName>
    <alternativeName>
        <fullName>Protein U18</fullName>
    </alternativeName>
</protein>
<proteinExistence type="inferred from homology"/>
<organism>
    <name type="scientific">Human herpesvirus 6B (strain Z29)</name>
    <name type="common">HHV-6 variant B</name>
    <name type="synonym">Human B lymphotropic virus</name>
    <dbReference type="NCBI Taxonomy" id="36351"/>
    <lineage>
        <taxon>Viruses</taxon>
        <taxon>Duplodnaviria</taxon>
        <taxon>Heunggongvirae</taxon>
        <taxon>Peploviricota</taxon>
        <taxon>Herviviricetes</taxon>
        <taxon>Herpesvirales</taxon>
        <taxon>Orthoherpesviridae</taxon>
        <taxon>Betaherpesvirinae</taxon>
        <taxon>Roseolovirus</taxon>
        <taxon>Roseolovirus humanbeta6b</taxon>
        <taxon>Human herpesvirus 6B</taxon>
    </lineage>
</organism>